<gene>
    <name evidence="1" type="primary">rplD</name>
    <name type="ordered locus">UUR10_0227</name>
</gene>
<proteinExistence type="inferred from homology"/>
<comment type="function">
    <text evidence="1">One of the primary rRNA binding proteins, this protein initially binds near the 5'-end of the 23S rRNA. It is important during the early stages of 50S assembly. It makes multiple contacts with different domains of the 23S rRNA in the assembled 50S subunit and ribosome.</text>
</comment>
<comment type="function">
    <text evidence="1">Forms part of the polypeptide exit tunnel.</text>
</comment>
<comment type="subunit">
    <text evidence="1">Part of the 50S ribosomal subunit.</text>
</comment>
<comment type="similarity">
    <text evidence="1">Belongs to the universal ribosomal protein uL4 family.</text>
</comment>
<keyword id="KW-0687">Ribonucleoprotein</keyword>
<keyword id="KW-0689">Ribosomal protein</keyword>
<keyword id="KW-0694">RNA-binding</keyword>
<keyword id="KW-0699">rRNA-binding</keyword>
<feature type="chain" id="PRO_1000142203" description="Large ribosomal subunit protein uL4">
    <location>
        <begin position="1"/>
        <end position="211"/>
    </location>
</feature>
<feature type="region of interest" description="Disordered" evidence="2">
    <location>
        <begin position="44"/>
        <end position="90"/>
    </location>
</feature>
<feature type="compositionally biased region" description="Basic residues" evidence="2">
    <location>
        <begin position="60"/>
        <end position="72"/>
    </location>
</feature>
<organism>
    <name type="scientific">Ureaplasma urealyticum serovar 10 (strain ATCC 33699 / Western)</name>
    <dbReference type="NCBI Taxonomy" id="565575"/>
    <lineage>
        <taxon>Bacteria</taxon>
        <taxon>Bacillati</taxon>
        <taxon>Mycoplasmatota</taxon>
        <taxon>Mycoplasmoidales</taxon>
        <taxon>Mycoplasmoidaceae</taxon>
        <taxon>Ureaplasma</taxon>
    </lineage>
</organism>
<dbReference type="EMBL" id="CP001184">
    <property type="protein sequence ID" value="ACI59811.1"/>
    <property type="molecule type" value="Genomic_DNA"/>
</dbReference>
<dbReference type="RefSeq" id="WP_004025646.1">
    <property type="nucleotide sequence ID" value="NC_011374.1"/>
</dbReference>
<dbReference type="SMR" id="B5ZB41"/>
<dbReference type="STRING" id="565575.UUR10_0227"/>
<dbReference type="GeneID" id="93848707"/>
<dbReference type="KEGG" id="uue:UUR10_0227"/>
<dbReference type="eggNOG" id="COG0088">
    <property type="taxonomic scope" value="Bacteria"/>
</dbReference>
<dbReference type="HOGENOM" id="CLU_041575_5_2_14"/>
<dbReference type="OrthoDB" id="9803201at2"/>
<dbReference type="Proteomes" id="UP000002018">
    <property type="component" value="Chromosome"/>
</dbReference>
<dbReference type="GO" id="GO:1990904">
    <property type="term" value="C:ribonucleoprotein complex"/>
    <property type="evidence" value="ECO:0007669"/>
    <property type="project" value="UniProtKB-KW"/>
</dbReference>
<dbReference type="GO" id="GO:0005840">
    <property type="term" value="C:ribosome"/>
    <property type="evidence" value="ECO:0007669"/>
    <property type="project" value="UniProtKB-KW"/>
</dbReference>
<dbReference type="GO" id="GO:0019843">
    <property type="term" value="F:rRNA binding"/>
    <property type="evidence" value="ECO:0007669"/>
    <property type="project" value="UniProtKB-UniRule"/>
</dbReference>
<dbReference type="GO" id="GO:0003735">
    <property type="term" value="F:structural constituent of ribosome"/>
    <property type="evidence" value="ECO:0007669"/>
    <property type="project" value="InterPro"/>
</dbReference>
<dbReference type="GO" id="GO:0006412">
    <property type="term" value="P:translation"/>
    <property type="evidence" value="ECO:0007669"/>
    <property type="project" value="UniProtKB-UniRule"/>
</dbReference>
<dbReference type="Gene3D" id="3.40.1370.10">
    <property type="match status" value="1"/>
</dbReference>
<dbReference type="HAMAP" id="MF_01328_B">
    <property type="entry name" value="Ribosomal_uL4_B"/>
    <property type="match status" value="1"/>
</dbReference>
<dbReference type="InterPro" id="IPR002136">
    <property type="entry name" value="Ribosomal_uL4"/>
</dbReference>
<dbReference type="InterPro" id="IPR013005">
    <property type="entry name" value="Ribosomal_uL4-like"/>
</dbReference>
<dbReference type="InterPro" id="IPR023574">
    <property type="entry name" value="Ribosomal_uL4_dom_sf"/>
</dbReference>
<dbReference type="NCBIfam" id="TIGR03953">
    <property type="entry name" value="rplD_bact"/>
    <property type="match status" value="1"/>
</dbReference>
<dbReference type="PANTHER" id="PTHR10746">
    <property type="entry name" value="50S RIBOSOMAL PROTEIN L4"/>
    <property type="match status" value="1"/>
</dbReference>
<dbReference type="PANTHER" id="PTHR10746:SF6">
    <property type="entry name" value="LARGE RIBOSOMAL SUBUNIT PROTEIN UL4M"/>
    <property type="match status" value="1"/>
</dbReference>
<dbReference type="Pfam" id="PF00573">
    <property type="entry name" value="Ribosomal_L4"/>
    <property type="match status" value="1"/>
</dbReference>
<dbReference type="SUPFAM" id="SSF52166">
    <property type="entry name" value="Ribosomal protein L4"/>
    <property type="match status" value="1"/>
</dbReference>
<name>RL4_UREU1</name>
<accession>B5ZB41</accession>
<sequence length="211" mass="23427">MAKIKLLSIDGNFAKELEVTSDLFVEVPHKQAMFDSVLAENAAERQGTHSTLTKGEVRGGGKKPWRQKHTGKARTGSTRNPHWTGGGVVFGPKPNRNYNLKVNAKVRLLAFKSALTIKLNEGKMLGLVANSDLETPSTKKMVNFINNANLENQKVLLVIADHFSNIKKSTNNLQKVTTKLWYQVSVRDLMHANVVVVAEEAFTNYARKVSK</sequence>
<evidence type="ECO:0000255" key="1">
    <source>
        <dbReference type="HAMAP-Rule" id="MF_01328"/>
    </source>
</evidence>
<evidence type="ECO:0000256" key="2">
    <source>
        <dbReference type="SAM" id="MobiDB-lite"/>
    </source>
</evidence>
<evidence type="ECO:0000305" key="3"/>
<protein>
    <recommendedName>
        <fullName evidence="1">Large ribosomal subunit protein uL4</fullName>
    </recommendedName>
    <alternativeName>
        <fullName evidence="3">50S ribosomal protein L4</fullName>
    </alternativeName>
</protein>
<reference key="1">
    <citation type="submission" date="2008-10" db="EMBL/GenBank/DDBJ databases">
        <title>Genome sequence of Ureaplasma urealyticum serovar 10 ATCC-33699.</title>
        <authorList>
            <person name="Shrivastava S."/>
            <person name="Methe B.A."/>
            <person name="Glass J."/>
            <person name="White K."/>
            <person name="Duffy L.B."/>
        </authorList>
    </citation>
    <scope>NUCLEOTIDE SEQUENCE [LARGE SCALE GENOMIC DNA]</scope>
    <source>
        <strain>ATCC 33699 / Western</strain>
    </source>
</reference>